<evidence type="ECO:0000255" key="1">
    <source>
        <dbReference type="HAMAP-Rule" id="MF_01212"/>
    </source>
</evidence>
<evidence type="ECO:0000255" key="2">
    <source>
        <dbReference type="PROSITE-ProRule" id="PRU01175"/>
    </source>
</evidence>
<evidence type="ECO:0000256" key="3">
    <source>
        <dbReference type="SAM" id="MobiDB-lite"/>
    </source>
</evidence>
<organism>
    <name type="scientific">Cereibacter sphaeroides (strain ATCC 17025 / ATH 2.4.3)</name>
    <name type="common">Rhodobacter sphaeroides</name>
    <dbReference type="NCBI Taxonomy" id="349102"/>
    <lineage>
        <taxon>Bacteria</taxon>
        <taxon>Pseudomonadati</taxon>
        <taxon>Pseudomonadota</taxon>
        <taxon>Alphaproteobacteria</taxon>
        <taxon>Rhodobacterales</taxon>
        <taxon>Paracoccaceae</taxon>
        <taxon>Cereibacter</taxon>
    </lineage>
</organism>
<sequence>MLAPYACQPGESRGRQQPESMSTFRSPFQRDRDRIIHSSAFRRLKHKTQVFVEHEGDYYRTRLTHSIEVAQVARTISGVLGLNTDLAECIALAHDLGHTPFGHTGEDALAKLMEPYGGFDHNAQAMRIVTRLERHYAEFDGLNLTWESLEGIAKHNGPVEGPLPYALAEANAQWDLELHTYASAEAQVAAIADDVAYSHHDLHDGLRSGLFTEDDLMELPVTAPAFAEVDALYPGLEPMRRRHEALRRVFGRMVEDVIAVAQGRLEAAQPKSVEEIRQMGATVIRFSKPLYQELKVIRSFLFHRMYRAPSVMKERAKVTAVVNDLFPLFMRQPELLPQEWRRDVEAAEDETTLARIVADYVAGMTDRFALQEHARLCG</sequence>
<reference key="1">
    <citation type="submission" date="2007-04" db="EMBL/GenBank/DDBJ databases">
        <title>Complete sequence of chromosome of Rhodobacter sphaeroides ATCC 17025.</title>
        <authorList>
            <consortium name="US DOE Joint Genome Institute"/>
            <person name="Copeland A."/>
            <person name="Lucas S."/>
            <person name="Lapidus A."/>
            <person name="Barry K."/>
            <person name="Detter J.C."/>
            <person name="Glavina del Rio T."/>
            <person name="Hammon N."/>
            <person name="Israni S."/>
            <person name="Dalin E."/>
            <person name="Tice H."/>
            <person name="Pitluck S."/>
            <person name="Chertkov O."/>
            <person name="Brettin T."/>
            <person name="Bruce D."/>
            <person name="Han C."/>
            <person name="Schmutz J."/>
            <person name="Larimer F."/>
            <person name="Land M."/>
            <person name="Hauser L."/>
            <person name="Kyrpides N."/>
            <person name="Kim E."/>
            <person name="Richardson P."/>
            <person name="Mackenzie C."/>
            <person name="Choudhary M."/>
            <person name="Donohue T.J."/>
            <person name="Kaplan S."/>
        </authorList>
    </citation>
    <scope>NUCLEOTIDE SEQUENCE [LARGE SCALE GENOMIC DNA]</scope>
    <source>
        <strain>ATCC 17025 / ATH 2.4.3</strain>
    </source>
</reference>
<gene>
    <name type="ordered locus">Rsph17025_1197</name>
</gene>
<name>DGTL1_CERS5</name>
<feature type="chain" id="PRO_1000164738" description="Deoxyguanosinetriphosphate triphosphohydrolase-like protein">
    <location>
        <begin position="1"/>
        <end position="378"/>
    </location>
</feature>
<feature type="domain" description="HD" evidence="2">
    <location>
        <begin position="62"/>
        <end position="198"/>
    </location>
</feature>
<feature type="region of interest" description="Disordered" evidence="3">
    <location>
        <begin position="1"/>
        <end position="28"/>
    </location>
</feature>
<feature type="compositionally biased region" description="Polar residues" evidence="3">
    <location>
        <begin position="15"/>
        <end position="26"/>
    </location>
</feature>
<protein>
    <recommendedName>
        <fullName evidence="1">Deoxyguanosinetriphosphate triphosphohydrolase-like protein</fullName>
    </recommendedName>
</protein>
<dbReference type="EMBL" id="CP000661">
    <property type="protein sequence ID" value="ABP70098.1"/>
    <property type="molecule type" value="Genomic_DNA"/>
</dbReference>
<dbReference type="SMR" id="A4WRT4"/>
<dbReference type="STRING" id="349102.Rsph17025_1197"/>
<dbReference type="KEGG" id="rsq:Rsph17025_1197"/>
<dbReference type="eggNOG" id="COG0232">
    <property type="taxonomic scope" value="Bacteria"/>
</dbReference>
<dbReference type="HOGENOM" id="CLU_028163_1_0_5"/>
<dbReference type="BioCyc" id="RSPH349102:G1G8M-1225-MONOMER"/>
<dbReference type="GO" id="GO:0008832">
    <property type="term" value="F:dGTPase activity"/>
    <property type="evidence" value="ECO:0007669"/>
    <property type="project" value="TreeGrafter"/>
</dbReference>
<dbReference type="GO" id="GO:0006203">
    <property type="term" value="P:dGTP catabolic process"/>
    <property type="evidence" value="ECO:0007669"/>
    <property type="project" value="TreeGrafter"/>
</dbReference>
<dbReference type="CDD" id="cd00077">
    <property type="entry name" value="HDc"/>
    <property type="match status" value="1"/>
</dbReference>
<dbReference type="Gene3D" id="1.10.3210.10">
    <property type="entry name" value="Hypothetical protein af1432"/>
    <property type="match status" value="1"/>
</dbReference>
<dbReference type="HAMAP" id="MF_01212">
    <property type="entry name" value="dGTPase_type2"/>
    <property type="match status" value="1"/>
</dbReference>
<dbReference type="InterPro" id="IPR006261">
    <property type="entry name" value="dGTPase"/>
</dbReference>
<dbReference type="InterPro" id="IPR050135">
    <property type="entry name" value="dGTPase-like"/>
</dbReference>
<dbReference type="InterPro" id="IPR023023">
    <property type="entry name" value="dNTPase_2"/>
</dbReference>
<dbReference type="InterPro" id="IPR003607">
    <property type="entry name" value="HD/PDEase_dom"/>
</dbReference>
<dbReference type="InterPro" id="IPR006674">
    <property type="entry name" value="HD_domain"/>
</dbReference>
<dbReference type="InterPro" id="IPR026875">
    <property type="entry name" value="PHydrolase_assoc_dom"/>
</dbReference>
<dbReference type="NCBIfam" id="TIGR01353">
    <property type="entry name" value="dGTP_triPase"/>
    <property type="match status" value="1"/>
</dbReference>
<dbReference type="NCBIfam" id="NF002326">
    <property type="entry name" value="PRK01286.1-1"/>
    <property type="match status" value="1"/>
</dbReference>
<dbReference type="NCBIfam" id="NF002328">
    <property type="entry name" value="PRK01286.1-3"/>
    <property type="match status" value="1"/>
</dbReference>
<dbReference type="PANTHER" id="PTHR11373:SF43">
    <property type="entry name" value="DEOXYGUANOSINETRIPHOSPHATE TRIPHOSPHOHYDROLASE-LIKE PROTEIN"/>
    <property type="match status" value="1"/>
</dbReference>
<dbReference type="PANTHER" id="PTHR11373">
    <property type="entry name" value="DEOXYNUCLEOSIDE TRIPHOSPHATE TRIPHOSPHOHYDROLASE"/>
    <property type="match status" value="1"/>
</dbReference>
<dbReference type="Pfam" id="PF01966">
    <property type="entry name" value="HD"/>
    <property type="match status" value="1"/>
</dbReference>
<dbReference type="Pfam" id="PF13286">
    <property type="entry name" value="HD_assoc"/>
    <property type="match status" value="1"/>
</dbReference>
<dbReference type="SMART" id="SM00471">
    <property type="entry name" value="HDc"/>
    <property type="match status" value="1"/>
</dbReference>
<dbReference type="SUPFAM" id="SSF109604">
    <property type="entry name" value="HD-domain/PDEase-like"/>
    <property type="match status" value="1"/>
</dbReference>
<dbReference type="PROSITE" id="PS51831">
    <property type="entry name" value="HD"/>
    <property type="match status" value="1"/>
</dbReference>
<comment type="similarity">
    <text evidence="1">Belongs to the dGTPase family. Type 2 subfamily.</text>
</comment>
<keyword id="KW-0378">Hydrolase</keyword>
<proteinExistence type="inferred from homology"/>
<accession>A4WRT4</accession>